<proteinExistence type="evidence at transcript level"/>
<feature type="chain" id="PRO_0000097214" description="Meiotic recombination protein REC104">
    <location>
        <begin position="1"/>
        <end position="183"/>
    </location>
</feature>
<gene>
    <name type="primary">REC104</name>
</gene>
<name>RE104_SACPA</name>
<organism>
    <name type="scientific">Saccharomyces paradoxus</name>
    <name type="common">Yeast</name>
    <name type="synonym">Saccharomyces douglasii</name>
    <dbReference type="NCBI Taxonomy" id="27291"/>
    <lineage>
        <taxon>Eukaryota</taxon>
        <taxon>Fungi</taxon>
        <taxon>Dikarya</taxon>
        <taxon>Ascomycota</taxon>
        <taxon>Saccharomycotina</taxon>
        <taxon>Saccharomycetes</taxon>
        <taxon>Saccharomycetales</taxon>
        <taxon>Saccharomycetaceae</taxon>
        <taxon>Saccharomyces</taxon>
    </lineage>
</organism>
<comment type="function">
    <text evidence="1">Potential transcriptional regulator that is required to activate expression of a number of early meiotic genes including HOP1.</text>
</comment>
<comment type="developmental stage">
    <text>Meiosis-specific.</text>
</comment>
<evidence type="ECO:0000250" key="1"/>
<protein>
    <recommendedName>
        <fullName>Meiotic recombination protein REC104</fullName>
    </recommendedName>
</protein>
<dbReference type="EMBL" id="U66719">
    <property type="protein sequence ID" value="AAB41528.1"/>
    <property type="molecule type" value="Genomic_DNA"/>
</dbReference>
<dbReference type="SMR" id="Q92378"/>
<dbReference type="VEuPathDB" id="FungiDB:SPAR_H01980"/>
<dbReference type="GO" id="GO:0042138">
    <property type="term" value="P:meiotic DNA double-strand break formation"/>
    <property type="evidence" value="ECO:0007669"/>
    <property type="project" value="InterPro"/>
</dbReference>
<dbReference type="InterPro" id="IPR035349">
    <property type="entry name" value="Rec104"/>
</dbReference>
<dbReference type="Pfam" id="PF17378">
    <property type="entry name" value="REC104"/>
    <property type="match status" value="1"/>
</dbReference>
<accession>Q92378</accession>
<reference key="1">
    <citation type="journal article" date="1997" name="Curr. Genet.">
        <title>Isolation of early meiotic recombination genes analogous to S. cerevisiae REC104 from the yeasts S. paradoxus and S. pastorianus.</title>
        <authorList>
            <person name="Nau J.J."/>
            <person name="Summers K.R."/>
            <person name="Galbraith A.M."/>
            <person name="Bullard S.A."/>
            <person name="Malone R.E."/>
        </authorList>
    </citation>
    <scope>NUCLEOTIDE SEQUENCE [GENOMIC DNA]</scope>
    <source>
        <strain>DBVPG 6466 / CBS 5829</strain>
    </source>
</reference>
<keyword id="KW-0010">Activator</keyword>
<keyword id="KW-0469">Meiosis</keyword>
<keyword id="KW-0804">Transcription</keyword>
<keyword id="KW-0805">Transcription regulation</keyword>
<sequence length="183" mass="20789">MSFEEEEKNKVTCTQDFLRQYFVSESVSIQFGLNNKTVKRINEDEFDKAINCIMAWTRYPEAVVKRTASTYLLSDSCKKSTTLSLPFVLDDALCIPKGVESNNNDTSLLYSDTLYGDDSLIRRNEQVRDELEEELSFTLLRSEINEIKPISSSSTPQILQSDYSAVMQETQASNGSIFQFSSP</sequence>